<keyword id="KW-0010">Activator</keyword>
<keyword id="KW-1005">Bacterial flagellum biogenesis</keyword>
<keyword id="KW-0963">Cytoplasm</keyword>
<keyword id="KW-0238">DNA-binding</keyword>
<keyword id="KW-0479">Metal-binding</keyword>
<keyword id="KW-0804">Transcription</keyword>
<keyword id="KW-0805">Transcription regulation</keyword>
<keyword id="KW-0862">Zinc</keyword>
<organism>
    <name type="scientific">Burkholderia lata (strain ATCC 17760 / DSM 23089 / LMG 22485 / NCIMB 9086 / R18194 / 383)</name>
    <dbReference type="NCBI Taxonomy" id="482957"/>
    <lineage>
        <taxon>Bacteria</taxon>
        <taxon>Pseudomonadati</taxon>
        <taxon>Pseudomonadota</taxon>
        <taxon>Betaproteobacteria</taxon>
        <taxon>Burkholderiales</taxon>
        <taxon>Burkholderiaceae</taxon>
        <taxon>Burkholderia</taxon>
        <taxon>Burkholderia cepacia complex</taxon>
    </lineage>
</organism>
<protein>
    <recommendedName>
        <fullName evidence="1">Flagellar transcriptional regulator FlhC</fullName>
    </recommendedName>
</protein>
<reference key="1">
    <citation type="submission" date="2005-10" db="EMBL/GenBank/DDBJ databases">
        <title>Complete sequence of chromosome 3 of Burkholderia sp. 383.</title>
        <authorList>
            <consortium name="US DOE Joint Genome Institute"/>
            <person name="Copeland A."/>
            <person name="Lucas S."/>
            <person name="Lapidus A."/>
            <person name="Barry K."/>
            <person name="Detter J.C."/>
            <person name="Glavina T."/>
            <person name="Hammon N."/>
            <person name="Israni S."/>
            <person name="Pitluck S."/>
            <person name="Chain P."/>
            <person name="Malfatti S."/>
            <person name="Shin M."/>
            <person name="Vergez L."/>
            <person name="Schmutz J."/>
            <person name="Larimer F."/>
            <person name="Land M."/>
            <person name="Kyrpides N."/>
            <person name="Lykidis A."/>
            <person name="Richardson P."/>
        </authorList>
    </citation>
    <scope>NUCLEOTIDE SEQUENCE [LARGE SCALE GENOMIC DNA]</scope>
    <source>
        <strain>ATCC 17760 / DSM 23089 / LMG 22485 / NCIMB 9086 / R18194 / 383</strain>
    </source>
</reference>
<comment type="function">
    <text evidence="1">Functions in complex with FlhD as a master transcriptional regulator that regulates transcription of several flagellar and non-flagellar operons by binding to their promoter region. Activates expression of class 2 flagellar genes, including fliA, which is a flagellum-specific sigma factor that turns on the class 3 genes. Also regulates genes whose products function in a variety of physiological pathways.</text>
</comment>
<comment type="cofactor">
    <cofactor evidence="1">
        <name>Zn(2+)</name>
        <dbReference type="ChEBI" id="CHEBI:29105"/>
    </cofactor>
    <text evidence="1">Binds 1 zinc ion per subunit.</text>
</comment>
<comment type="subunit">
    <text evidence="1">Heterohexamer composed of two FlhC and four FlhD subunits. Each FlhC binds a FlhD dimer, forming a heterotrimer, and a hexamer assembles by dimerization of two heterotrimers.</text>
</comment>
<comment type="subcellular location">
    <subcellularLocation>
        <location evidence="1">Cytoplasm</location>
    </subcellularLocation>
</comment>
<comment type="similarity">
    <text evidence="1">Belongs to the FlhC family.</text>
</comment>
<accession>Q39LF8</accession>
<feature type="chain" id="PRO_0000406756" description="Flagellar transcriptional regulator FlhC">
    <location>
        <begin position="1"/>
        <end position="225"/>
    </location>
</feature>
<feature type="binding site" evidence="1">
    <location>
        <position position="149"/>
    </location>
    <ligand>
        <name>Zn(2+)</name>
        <dbReference type="ChEBI" id="CHEBI:29105"/>
    </ligand>
</feature>
<feature type="binding site" evidence="1">
    <location>
        <position position="152"/>
    </location>
    <ligand>
        <name>Zn(2+)</name>
        <dbReference type="ChEBI" id="CHEBI:29105"/>
    </ligand>
</feature>
<feature type="binding site" evidence="1">
    <location>
        <position position="169"/>
    </location>
    <ligand>
        <name>Zn(2+)</name>
        <dbReference type="ChEBI" id="CHEBI:29105"/>
    </ligand>
</feature>
<feature type="binding site" evidence="1">
    <location>
        <position position="172"/>
    </location>
    <ligand>
        <name>Zn(2+)</name>
        <dbReference type="ChEBI" id="CHEBI:29105"/>
    </ligand>
</feature>
<sequence>MSGRAGRHGLADDAQLTMHAAALIRLGARLQMLEIECALPREHLVRLYREVRGVAAPKGLLPSSIDWYMTWLANIHASLFHNIYRFLRNQAGCPRLEALVKAYTLYAEQGDATRRALPLDLTRALPLDLTRAWMLVRFVDAGVLDIARCRDCGAAFITYRHALRRHPVCVACRLPARAGKRAVAAPQRATADTRHARRQDARTAVVACRDGSTTTGGASGERHAV</sequence>
<dbReference type="EMBL" id="CP000150">
    <property type="protein sequence ID" value="ABB06708.1"/>
    <property type="molecule type" value="Genomic_DNA"/>
</dbReference>
<dbReference type="RefSeq" id="WP_011350350.1">
    <property type="nucleotide sequence ID" value="NC_007509.1"/>
</dbReference>
<dbReference type="SMR" id="Q39LF8"/>
<dbReference type="GeneID" id="45093012"/>
<dbReference type="KEGG" id="bur:Bcep18194_C7664"/>
<dbReference type="PATRIC" id="fig|482957.22.peg.8280"/>
<dbReference type="HOGENOM" id="CLU_122824_0_0_4"/>
<dbReference type="Proteomes" id="UP000002705">
    <property type="component" value="Chromosome 3"/>
</dbReference>
<dbReference type="GO" id="GO:0005737">
    <property type="term" value="C:cytoplasm"/>
    <property type="evidence" value="ECO:0007669"/>
    <property type="project" value="UniProtKB-SubCell"/>
</dbReference>
<dbReference type="GO" id="GO:0003677">
    <property type="term" value="F:DNA binding"/>
    <property type="evidence" value="ECO:0007669"/>
    <property type="project" value="UniProtKB-UniRule"/>
</dbReference>
<dbReference type="GO" id="GO:0008270">
    <property type="term" value="F:zinc ion binding"/>
    <property type="evidence" value="ECO:0007669"/>
    <property type="project" value="UniProtKB-UniRule"/>
</dbReference>
<dbReference type="GO" id="GO:0044781">
    <property type="term" value="P:bacterial-type flagellum organization"/>
    <property type="evidence" value="ECO:0007669"/>
    <property type="project" value="UniProtKB-KW"/>
</dbReference>
<dbReference type="GO" id="GO:0045893">
    <property type="term" value="P:positive regulation of DNA-templated transcription"/>
    <property type="evidence" value="ECO:0007669"/>
    <property type="project" value="InterPro"/>
</dbReference>
<dbReference type="GO" id="GO:1902208">
    <property type="term" value="P:regulation of bacterial-type flagellum assembly"/>
    <property type="evidence" value="ECO:0007669"/>
    <property type="project" value="UniProtKB-UniRule"/>
</dbReference>
<dbReference type="HAMAP" id="MF_01891">
    <property type="entry name" value="FhlC"/>
    <property type="match status" value="1"/>
</dbReference>
<dbReference type="InterPro" id="IPR007944">
    <property type="entry name" value="FlhC"/>
</dbReference>
<dbReference type="Pfam" id="PF05280">
    <property type="entry name" value="FlhC"/>
    <property type="match status" value="1"/>
</dbReference>
<dbReference type="SUPFAM" id="SSF160930">
    <property type="entry name" value="FlhC-like"/>
    <property type="match status" value="1"/>
</dbReference>
<name>FLHC_BURL3</name>
<gene>
    <name evidence="1" type="primary">flhC</name>
    <name type="ordered locus">Bcep18194_C7664</name>
</gene>
<evidence type="ECO:0000255" key="1">
    <source>
        <dbReference type="HAMAP-Rule" id="MF_01891"/>
    </source>
</evidence>
<proteinExistence type="inferred from homology"/>